<organism>
    <name type="scientific">Xanthomonas campestris pv. campestris (strain B100)</name>
    <dbReference type="NCBI Taxonomy" id="509169"/>
    <lineage>
        <taxon>Bacteria</taxon>
        <taxon>Pseudomonadati</taxon>
        <taxon>Pseudomonadota</taxon>
        <taxon>Gammaproteobacteria</taxon>
        <taxon>Lysobacterales</taxon>
        <taxon>Lysobacteraceae</taxon>
        <taxon>Xanthomonas</taxon>
    </lineage>
</organism>
<sequence length="92" mass="10331">MSTISRDSCPALRAGVRLQHDRARDQWVLLAPERVVELDDIALVVAQRYDGTQSLAEIAQTLATEFDADASEIETDVIELTTTLHQKRLLRL</sequence>
<protein>
    <recommendedName>
        <fullName evidence="1">PqqA binding protein</fullName>
    </recommendedName>
    <alternativeName>
        <fullName evidence="1">Coenzyme PQQ synthesis protein D</fullName>
    </alternativeName>
    <alternativeName>
        <fullName evidence="1">Pyrroloquinoline quinone biosynthesis protein D</fullName>
    </alternativeName>
</protein>
<gene>
    <name evidence="1" type="primary">pqqD</name>
    <name type="ordered locus">xcc-b100_1213</name>
</gene>
<feature type="chain" id="PRO_1000131192" description="PqqA binding protein">
    <location>
        <begin position="1"/>
        <end position="92"/>
    </location>
</feature>
<dbReference type="EMBL" id="AM920689">
    <property type="protein sequence ID" value="CAP50561.1"/>
    <property type="molecule type" value="Genomic_DNA"/>
</dbReference>
<dbReference type="SMR" id="B0RQ26"/>
<dbReference type="KEGG" id="xca:xcc-b100_1213"/>
<dbReference type="HOGENOM" id="CLU_163864_0_0_6"/>
<dbReference type="UniPathway" id="UPA00539"/>
<dbReference type="Proteomes" id="UP000001188">
    <property type="component" value="Chromosome"/>
</dbReference>
<dbReference type="GO" id="GO:0048038">
    <property type="term" value="F:quinone binding"/>
    <property type="evidence" value="ECO:0007669"/>
    <property type="project" value="InterPro"/>
</dbReference>
<dbReference type="GO" id="GO:0018189">
    <property type="term" value="P:pyrroloquinoline quinone biosynthetic process"/>
    <property type="evidence" value="ECO:0007669"/>
    <property type="project" value="UniProtKB-UniRule"/>
</dbReference>
<dbReference type="Gene3D" id="1.10.10.1150">
    <property type="entry name" value="Coenzyme PQQ synthesis protein D (PqqD)"/>
    <property type="match status" value="1"/>
</dbReference>
<dbReference type="HAMAP" id="MF_00655">
    <property type="entry name" value="PQQ_syn_PqqD"/>
    <property type="match status" value="1"/>
</dbReference>
<dbReference type="InterPro" id="IPR008792">
    <property type="entry name" value="PQQD"/>
</dbReference>
<dbReference type="InterPro" id="IPR022479">
    <property type="entry name" value="PqqD_bac"/>
</dbReference>
<dbReference type="InterPro" id="IPR041881">
    <property type="entry name" value="PqqD_sf"/>
</dbReference>
<dbReference type="NCBIfam" id="TIGR03859">
    <property type="entry name" value="PQQ_PqqD"/>
    <property type="match status" value="1"/>
</dbReference>
<dbReference type="Pfam" id="PF05402">
    <property type="entry name" value="PqqD"/>
    <property type="match status" value="1"/>
</dbReference>
<accession>B0RQ26</accession>
<keyword id="KW-0884">PQQ biosynthesis</keyword>
<proteinExistence type="inferred from homology"/>
<evidence type="ECO:0000255" key="1">
    <source>
        <dbReference type="HAMAP-Rule" id="MF_00655"/>
    </source>
</evidence>
<comment type="function">
    <text evidence="1">Functions as a PqqA binding protein and presents PqqA to PqqE, in the pyrroloquinoline quinone (PQQ) biosynthetic pathway.</text>
</comment>
<comment type="pathway">
    <text evidence="1">Cofactor biosynthesis; pyrroloquinoline quinone biosynthesis.</text>
</comment>
<comment type="subunit">
    <text evidence="1">Monomer. Interacts with PqqE.</text>
</comment>
<comment type="similarity">
    <text evidence="1">Belongs to the PqqD family.</text>
</comment>
<name>PQQD_XANCB</name>
<reference key="1">
    <citation type="journal article" date="2008" name="J. Biotechnol.">
        <title>The genome of Xanthomonas campestris pv. campestris B100 and its use for the reconstruction of metabolic pathways involved in xanthan biosynthesis.</title>
        <authorList>
            <person name="Vorhoelter F.-J."/>
            <person name="Schneiker S."/>
            <person name="Goesmann A."/>
            <person name="Krause L."/>
            <person name="Bekel T."/>
            <person name="Kaiser O."/>
            <person name="Linke B."/>
            <person name="Patschkowski T."/>
            <person name="Rueckert C."/>
            <person name="Schmid J."/>
            <person name="Sidhu V.K."/>
            <person name="Sieber V."/>
            <person name="Tauch A."/>
            <person name="Watt S.A."/>
            <person name="Weisshaar B."/>
            <person name="Becker A."/>
            <person name="Niehaus K."/>
            <person name="Puehler A."/>
        </authorList>
    </citation>
    <scope>NUCLEOTIDE SEQUENCE [LARGE SCALE GENOMIC DNA]</scope>
    <source>
        <strain>B100</strain>
    </source>
</reference>